<keyword id="KW-0408">Iron</keyword>
<keyword id="KW-0411">Iron-sulfur</keyword>
<keyword id="KW-0479">Metal-binding</keyword>
<evidence type="ECO:0000255" key="1">
    <source>
        <dbReference type="HAMAP-Rule" id="MF_01380"/>
    </source>
</evidence>
<accession>A9R1E3</accession>
<comment type="function">
    <text evidence="1">Required for insertion of 4Fe-4S clusters for at least IspG.</text>
</comment>
<comment type="cofactor">
    <cofactor evidence="1">
        <name>iron-sulfur cluster</name>
        <dbReference type="ChEBI" id="CHEBI:30408"/>
    </cofactor>
    <text evidence="1">Binds 1 iron-sulfur cluster per subunit.</text>
</comment>
<comment type="subunit">
    <text evidence="1">Homodimer.</text>
</comment>
<comment type="similarity">
    <text evidence="1">Belongs to the HesB/IscA family.</text>
</comment>
<protein>
    <recommendedName>
        <fullName evidence="1">Iron-sulfur cluster insertion protein ErpA</fullName>
    </recommendedName>
</protein>
<gene>
    <name evidence="1" type="primary">erpA</name>
    <name type="ordered locus">YpAngola_A0992</name>
</gene>
<sequence>MSNETVLPLQFTEAAAKKVKLLISDEENPNLKLRVYITGGGCSGFQYGFTFDDQVNDGDMTIEKQGVELVVDPMSLQYLVGGAVDYTEGLEGSRFIVTNPNAKSTCGCGSSFSI</sequence>
<reference key="1">
    <citation type="journal article" date="2010" name="J. Bacteriol.">
        <title>Genome sequence of the deep-rooted Yersinia pestis strain Angola reveals new insights into the evolution and pangenome of the plague bacterium.</title>
        <authorList>
            <person name="Eppinger M."/>
            <person name="Worsham P.L."/>
            <person name="Nikolich M.P."/>
            <person name="Riley D.R."/>
            <person name="Sebastian Y."/>
            <person name="Mou S."/>
            <person name="Achtman M."/>
            <person name="Lindler L.E."/>
            <person name="Ravel J."/>
        </authorList>
    </citation>
    <scope>NUCLEOTIDE SEQUENCE [LARGE SCALE GENOMIC DNA]</scope>
    <source>
        <strain>Angola</strain>
    </source>
</reference>
<proteinExistence type="inferred from homology"/>
<organism>
    <name type="scientific">Yersinia pestis bv. Antiqua (strain Angola)</name>
    <dbReference type="NCBI Taxonomy" id="349746"/>
    <lineage>
        <taxon>Bacteria</taxon>
        <taxon>Pseudomonadati</taxon>
        <taxon>Pseudomonadota</taxon>
        <taxon>Gammaproteobacteria</taxon>
        <taxon>Enterobacterales</taxon>
        <taxon>Yersiniaceae</taxon>
        <taxon>Yersinia</taxon>
    </lineage>
</organism>
<name>ERPA_YERPG</name>
<dbReference type="EMBL" id="CP000901">
    <property type="protein sequence ID" value="ABX87217.1"/>
    <property type="molecule type" value="Genomic_DNA"/>
</dbReference>
<dbReference type="RefSeq" id="WP_002209365.1">
    <property type="nucleotide sequence ID" value="NZ_CP009935.1"/>
</dbReference>
<dbReference type="SMR" id="A9R1E3"/>
<dbReference type="GeneID" id="96664241"/>
<dbReference type="KEGG" id="ypg:YpAngola_A0992"/>
<dbReference type="PATRIC" id="fig|349746.12.peg.1943"/>
<dbReference type="GO" id="GO:0005829">
    <property type="term" value="C:cytosol"/>
    <property type="evidence" value="ECO:0007669"/>
    <property type="project" value="TreeGrafter"/>
</dbReference>
<dbReference type="GO" id="GO:0051537">
    <property type="term" value="F:2 iron, 2 sulfur cluster binding"/>
    <property type="evidence" value="ECO:0007669"/>
    <property type="project" value="UniProtKB-ARBA"/>
</dbReference>
<dbReference type="GO" id="GO:0051539">
    <property type="term" value="F:4 iron, 4 sulfur cluster binding"/>
    <property type="evidence" value="ECO:0007669"/>
    <property type="project" value="TreeGrafter"/>
</dbReference>
<dbReference type="GO" id="GO:0005506">
    <property type="term" value="F:iron ion binding"/>
    <property type="evidence" value="ECO:0007669"/>
    <property type="project" value="UniProtKB-UniRule"/>
</dbReference>
<dbReference type="GO" id="GO:0016226">
    <property type="term" value="P:iron-sulfur cluster assembly"/>
    <property type="evidence" value="ECO:0007669"/>
    <property type="project" value="UniProtKB-UniRule"/>
</dbReference>
<dbReference type="FunFam" id="2.60.300.12:FF:000002">
    <property type="entry name" value="Iron-sulfur cluster insertion protein ErpA"/>
    <property type="match status" value="1"/>
</dbReference>
<dbReference type="Gene3D" id="2.60.300.12">
    <property type="entry name" value="HesB-like domain"/>
    <property type="match status" value="1"/>
</dbReference>
<dbReference type="HAMAP" id="MF_01380">
    <property type="entry name" value="Fe_S_insert_ErpA"/>
    <property type="match status" value="1"/>
</dbReference>
<dbReference type="InterPro" id="IPR000361">
    <property type="entry name" value="FeS_biogenesis"/>
</dbReference>
<dbReference type="InterPro" id="IPR016092">
    <property type="entry name" value="FeS_cluster_insertion"/>
</dbReference>
<dbReference type="InterPro" id="IPR017870">
    <property type="entry name" value="FeS_cluster_insertion_CS"/>
</dbReference>
<dbReference type="InterPro" id="IPR023063">
    <property type="entry name" value="FeS_cluster_insertion_RrpA"/>
</dbReference>
<dbReference type="InterPro" id="IPR035903">
    <property type="entry name" value="HesB-like_dom_sf"/>
</dbReference>
<dbReference type="NCBIfam" id="TIGR00049">
    <property type="entry name" value="iron-sulfur cluster assembly accessory protein"/>
    <property type="match status" value="1"/>
</dbReference>
<dbReference type="NCBIfam" id="NF010147">
    <property type="entry name" value="PRK13623.1"/>
    <property type="match status" value="1"/>
</dbReference>
<dbReference type="PANTHER" id="PTHR43011">
    <property type="entry name" value="IRON-SULFUR CLUSTER ASSEMBLY 2 HOMOLOG, MITOCHONDRIAL"/>
    <property type="match status" value="1"/>
</dbReference>
<dbReference type="PANTHER" id="PTHR43011:SF1">
    <property type="entry name" value="IRON-SULFUR CLUSTER ASSEMBLY 2 HOMOLOG, MITOCHONDRIAL"/>
    <property type="match status" value="1"/>
</dbReference>
<dbReference type="Pfam" id="PF01521">
    <property type="entry name" value="Fe-S_biosyn"/>
    <property type="match status" value="1"/>
</dbReference>
<dbReference type="SUPFAM" id="SSF89360">
    <property type="entry name" value="HesB-like domain"/>
    <property type="match status" value="1"/>
</dbReference>
<dbReference type="PROSITE" id="PS01152">
    <property type="entry name" value="HESB"/>
    <property type="match status" value="1"/>
</dbReference>
<feature type="chain" id="PRO_1000144947" description="Iron-sulfur cluster insertion protein ErpA">
    <location>
        <begin position="1"/>
        <end position="114"/>
    </location>
</feature>
<feature type="binding site" evidence="1">
    <location>
        <position position="42"/>
    </location>
    <ligand>
        <name>iron-sulfur cluster</name>
        <dbReference type="ChEBI" id="CHEBI:30408"/>
    </ligand>
</feature>
<feature type="binding site" evidence="1">
    <location>
        <position position="106"/>
    </location>
    <ligand>
        <name>iron-sulfur cluster</name>
        <dbReference type="ChEBI" id="CHEBI:30408"/>
    </ligand>
</feature>
<feature type="binding site" evidence="1">
    <location>
        <position position="108"/>
    </location>
    <ligand>
        <name>iron-sulfur cluster</name>
        <dbReference type="ChEBI" id="CHEBI:30408"/>
    </ligand>
</feature>